<proteinExistence type="inferred from homology"/>
<gene>
    <name evidence="1" type="primary">thiI</name>
    <name type="ordered locus">ECSE_0445</name>
</gene>
<organism>
    <name type="scientific">Escherichia coli (strain SE11)</name>
    <dbReference type="NCBI Taxonomy" id="409438"/>
    <lineage>
        <taxon>Bacteria</taxon>
        <taxon>Pseudomonadati</taxon>
        <taxon>Pseudomonadota</taxon>
        <taxon>Gammaproteobacteria</taxon>
        <taxon>Enterobacterales</taxon>
        <taxon>Enterobacteriaceae</taxon>
        <taxon>Escherichia</taxon>
    </lineage>
</organism>
<evidence type="ECO:0000255" key="1">
    <source>
        <dbReference type="HAMAP-Rule" id="MF_00021"/>
    </source>
</evidence>
<keyword id="KW-0067">ATP-binding</keyword>
<keyword id="KW-0963">Cytoplasm</keyword>
<keyword id="KW-1015">Disulfide bond</keyword>
<keyword id="KW-0547">Nucleotide-binding</keyword>
<keyword id="KW-0676">Redox-active center</keyword>
<keyword id="KW-0694">RNA-binding</keyword>
<keyword id="KW-0784">Thiamine biosynthesis</keyword>
<keyword id="KW-0808">Transferase</keyword>
<keyword id="KW-0820">tRNA-binding</keyword>
<accession>B6HZM6</accession>
<comment type="function">
    <text evidence="1">Catalyzes the ATP-dependent transfer of a sulfur to tRNA to produce 4-thiouridine in position 8 of tRNAs, which functions as a near-UV photosensor. Also catalyzes the transfer of sulfur to the sulfur carrier protein ThiS, forming ThiS-thiocarboxylate. This is a step in the synthesis of thiazole, in the thiamine biosynthesis pathway. The sulfur is donated as persulfide by IscS.</text>
</comment>
<comment type="catalytic activity">
    <reaction evidence="1">
        <text>[ThiI sulfur-carrier protein]-S-sulfanyl-L-cysteine + a uridine in tRNA + 2 reduced [2Fe-2S]-[ferredoxin] + ATP + H(+) = [ThiI sulfur-carrier protein]-L-cysteine + a 4-thiouridine in tRNA + 2 oxidized [2Fe-2S]-[ferredoxin] + AMP + diphosphate</text>
        <dbReference type="Rhea" id="RHEA:24176"/>
        <dbReference type="Rhea" id="RHEA-COMP:10000"/>
        <dbReference type="Rhea" id="RHEA-COMP:10001"/>
        <dbReference type="Rhea" id="RHEA-COMP:13337"/>
        <dbReference type="Rhea" id="RHEA-COMP:13338"/>
        <dbReference type="Rhea" id="RHEA-COMP:13339"/>
        <dbReference type="Rhea" id="RHEA-COMP:13340"/>
        <dbReference type="ChEBI" id="CHEBI:15378"/>
        <dbReference type="ChEBI" id="CHEBI:29950"/>
        <dbReference type="ChEBI" id="CHEBI:30616"/>
        <dbReference type="ChEBI" id="CHEBI:33019"/>
        <dbReference type="ChEBI" id="CHEBI:33737"/>
        <dbReference type="ChEBI" id="CHEBI:33738"/>
        <dbReference type="ChEBI" id="CHEBI:61963"/>
        <dbReference type="ChEBI" id="CHEBI:65315"/>
        <dbReference type="ChEBI" id="CHEBI:136798"/>
        <dbReference type="ChEBI" id="CHEBI:456215"/>
        <dbReference type="EC" id="2.8.1.4"/>
    </reaction>
</comment>
<comment type="catalytic activity">
    <reaction evidence="1">
        <text>[ThiS sulfur-carrier protein]-C-terminal Gly-Gly-AMP + S-sulfanyl-L-cysteinyl-[cysteine desulfurase] + AH2 = [ThiS sulfur-carrier protein]-C-terminal-Gly-aminoethanethioate + L-cysteinyl-[cysteine desulfurase] + A + AMP + 2 H(+)</text>
        <dbReference type="Rhea" id="RHEA:43340"/>
        <dbReference type="Rhea" id="RHEA-COMP:12157"/>
        <dbReference type="Rhea" id="RHEA-COMP:12158"/>
        <dbReference type="Rhea" id="RHEA-COMP:12910"/>
        <dbReference type="Rhea" id="RHEA-COMP:19908"/>
        <dbReference type="ChEBI" id="CHEBI:13193"/>
        <dbReference type="ChEBI" id="CHEBI:15378"/>
        <dbReference type="ChEBI" id="CHEBI:17499"/>
        <dbReference type="ChEBI" id="CHEBI:29950"/>
        <dbReference type="ChEBI" id="CHEBI:61963"/>
        <dbReference type="ChEBI" id="CHEBI:90618"/>
        <dbReference type="ChEBI" id="CHEBI:232372"/>
        <dbReference type="ChEBI" id="CHEBI:456215"/>
    </reaction>
</comment>
<comment type="pathway">
    <text evidence="1">Cofactor biosynthesis; thiamine diphosphate biosynthesis.</text>
</comment>
<comment type="subcellular location">
    <subcellularLocation>
        <location evidence="1">Cytoplasm</location>
    </subcellularLocation>
</comment>
<comment type="similarity">
    <text evidence="1">Belongs to the ThiI family.</text>
</comment>
<reference key="1">
    <citation type="journal article" date="2008" name="DNA Res.">
        <title>Complete genome sequence and comparative analysis of the wild-type commensal Escherichia coli strain SE11 isolated from a healthy adult.</title>
        <authorList>
            <person name="Oshima K."/>
            <person name="Toh H."/>
            <person name="Ogura Y."/>
            <person name="Sasamoto H."/>
            <person name="Morita H."/>
            <person name="Park S.-H."/>
            <person name="Ooka T."/>
            <person name="Iyoda S."/>
            <person name="Taylor T.D."/>
            <person name="Hayashi T."/>
            <person name="Itoh K."/>
            <person name="Hattori M."/>
        </authorList>
    </citation>
    <scope>NUCLEOTIDE SEQUENCE [LARGE SCALE GENOMIC DNA]</scope>
    <source>
        <strain>SE11</strain>
    </source>
</reference>
<feature type="chain" id="PRO_1000090013" description="tRNA sulfurtransferase">
    <location>
        <begin position="1"/>
        <end position="482"/>
    </location>
</feature>
<feature type="domain" description="THUMP" evidence="1">
    <location>
        <begin position="61"/>
        <end position="165"/>
    </location>
</feature>
<feature type="domain" description="Rhodanese" evidence="1">
    <location>
        <begin position="404"/>
        <end position="482"/>
    </location>
</feature>
<feature type="active site" description="Cysteine persulfide intermediate" evidence="1">
    <location>
        <position position="456"/>
    </location>
</feature>
<feature type="binding site" evidence="1">
    <location>
        <begin position="183"/>
        <end position="184"/>
    </location>
    <ligand>
        <name>ATP</name>
        <dbReference type="ChEBI" id="CHEBI:30616"/>
    </ligand>
</feature>
<feature type="binding site" evidence="1">
    <location>
        <position position="265"/>
    </location>
    <ligand>
        <name>ATP</name>
        <dbReference type="ChEBI" id="CHEBI:30616"/>
    </ligand>
</feature>
<feature type="binding site" evidence="1">
    <location>
        <position position="287"/>
    </location>
    <ligand>
        <name>ATP</name>
        <dbReference type="ChEBI" id="CHEBI:30616"/>
    </ligand>
</feature>
<feature type="binding site" evidence="1">
    <location>
        <position position="296"/>
    </location>
    <ligand>
        <name>ATP</name>
        <dbReference type="ChEBI" id="CHEBI:30616"/>
    </ligand>
</feature>
<feature type="disulfide bond" description="Redox-active" evidence="1">
    <location>
        <begin position="344"/>
        <end position="456"/>
    </location>
</feature>
<sequence>MKFIIKLFPEITIKSQSVRLRFIKILTGNIRNVLKHYDETLAVVRHWDNIEVRAKDENQRLAIRDALTRIPGIHHILEVEDVPFTDMHDIFEKALVQYRDQLEGKTFCVRVKRRGKHDFSSIDVERYVGGGLNQHIESARVKLTNPEVTVHLEVEDDRLLLIKGRYEGIGGFPIGTQEDVLSLISGGFDSGVSSYMLMRRGCRVHYCFFNLGGAAHEIGVRQVAHYLWNRFGSSHRVRFVAINFEPVVGEILEKIDDGQMGVILKRMMVRAASKVAERYGVQALVTGEALGQVSSQTLTNLRLIDNVSDTLILRPLISYDKEHIINLARQIGTEDFARTMPEYCGVISKSPTVKAVKSKIEAEEEKFDFSILDKVVEEANNVDIREIAQQTEQEVVEVETVNGFGPNDVILDIRSIDEQEDKPLKVEGIDVVSLPFYKLSTKFGDLDQNRTWLLWCERGVMSRLQALYLREQGFNNVKVYRP</sequence>
<dbReference type="EC" id="2.8.1.4" evidence="1"/>
<dbReference type="EMBL" id="AP009240">
    <property type="protein sequence ID" value="BAG75969.1"/>
    <property type="molecule type" value="Genomic_DNA"/>
</dbReference>
<dbReference type="RefSeq" id="WP_000668685.1">
    <property type="nucleotide sequence ID" value="NC_011415.1"/>
</dbReference>
<dbReference type="SMR" id="B6HZM6"/>
<dbReference type="KEGG" id="ecy:ECSE_0445"/>
<dbReference type="HOGENOM" id="CLU_037952_4_1_6"/>
<dbReference type="UniPathway" id="UPA00060"/>
<dbReference type="Proteomes" id="UP000008199">
    <property type="component" value="Chromosome"/>
</dbReference>
<dbReference type="GO" id="GO:0005829">
    <property type="term" value="C:cytosol"/>
    <property type="evidence" value="ECO:0007669"/>
    <property type="project" value="TreeGrafter"/>
</dbReference>
<dbReference type="GO" id="GO:0005524">
    <property type="term" value="F:ATP binding"/>
    <property type="evidence" value="ECO:0007669"/>
    <property type="project" value="UniProtKB-UniRule"/>
</dbReference>
<dbReference type="GO" id="GO:0004810">
    <property type="term" value="F:CCA tRNA nucleotidyltransferase activity"/>
    <property type="evidence" value="ECO:0007669"/>
    <property type="project" value="InterPro"/>
</dbReference>
<dbReference type="GO" id="GO:0000049">
    <property type="term" value="F:tRNA binding"/>
    <property type="evidence" value="ECO:0007669"/>
    <property type="project" value="UniProtKB-UniRule"/>
</dbReference>
<dbReference type="GO" id="GO:0140741">
    <property type="term" value="F:tRNA-uracil-4 sulfurtransferase activity"/>
    <property type="evidence" value="ECO:0007669"/>
    <property type="project" value="UniProtKB-EC"/>
</dbReference>
<dbReference type="GO" id="GO:0009228">
    <property type="term" value="P:thiamine biosynthetic process"/>
    <property type="evidence" value="ECO:0007669"/>
    <property type="project" value="UniProtKB-KW"/>
</dbReference>
<dbReference type="GO" id="GO:0009229">
    <property type="term" value="P:thiamine diphosphate biosynthetic process"/>
    <property type="evidence" value="ECO:0007669"/>
    <property type="project" value="UniProtKB-UniRule"/>
</dbReference>
<dbReference type="GO" id="GO:0052837">
    <property type="term" value="P:thiazole biosynthetic process"/>
    <property type="evidence" value="ECO:0007669"/>
    <property type="project" value="InterPro"/>
</dbReference>
<dbReference type="GO" id="GO:0002937">
    <property type="term" value="P:tRNA 4-thiouridine biosynthesis"/>
    <property type="evidence" value="ECO:0007669"/>
    <property type="project" value="TreeGrafter"/>
</dbReference>
<dbReference type="CDD" id="cd01712">
    <property type="entry name" value="PPase_ThiI"/>
    <property type="match status" value="1"/>
</dbReference>
<dbReference type="CDD" id="cd00158">
    <property type="entry name" value="RHOD"/>
    <property type="match status" value="1"/>
</dbReference>
<dbReference type="CDD" id="cd11716">
    <property type="entry name" value="THUMP_ThiI"/>
    <property type="match status" value="1"/>
</dbReference>
<dbReference type="FunFam" id="3.30.2130.30:FF:000002">
    <property type="entry name" value="tRNA sulfurtransferase"/>
    <property type="match status" value="1"/>
</dbReference>
<dbReference type="FunFam" id="3.40.250.10:FF:000003">
    <property type="entry name" value="tRNA sulfurtransferase"/>
    <property type="match status" value="1"/>
</dbReference>
<dbReference type="FunFam" id="3.40.50.620:FF:000029">
    <property type="entry name" value="tRNA sulfurtransferase"/>
    <property type="match status" value="1"/>
</dbReference>
<dbReference type="Gene3D" id="3.30.2130.30">
    <property type="match status" value="1"/>
</dbReference>
<dbReference type="Gene3D" id="3.40.50.620">
    <property type="entry name" value="HUPs"/>
    <property type="match status" value="1"/>
</dbReference>
<dbReference type="Gene3D" id="3.40.250.10">
    <property type="entry name" value="Rhodanese-like domain"/>
    <property type="match status" value="1"/>
</dbReference>
<dbReference type="HAMAP" id="MF_00021">
    <property type="entry name" value="ThiI"/>
    <property type="match status" value="1"/>
</dbReference>
<dbReference type="InterPro" id="IPR001763">
    <property type="entry name" value="Rhodanese-like_dom"/>
</dbReference>
<dbReference type="InterPro" id="IPR036873">
    <property type="entry name" value="Rhodanese-like_dom_sf"/>
</dbReference>
<dbReference type="InterPro" id="IPR014729">
    <property type="entry name" value="Rossmann-like_a/b/a_fold"/>
</dbReference>
<dbReference type="InterPro" id="IPR020536">
    <property type="entry name" value="ThiI_AANH"/>
</dbReference>
<dbReference type="InterPro" id="IPR054173">
    <property type="entry name" value="ThiI_fer"/>
</dbReference>
<dbReference type="InterPro" id="IPR049961">
    <property type="entry name" value="ThiI_N"/>
</dbReference>
<dbReference type="InterPro" id="IPR026340">
    <property type="entry name" value="THII_Thiazole_biosynth_dom"/>
</dbReference>
<dbReference type="InterPro" id="IPR004114">
    <property type="entry name" value="THUMP_dom"/>
</dbReference>
<dbReference type="InterPro" id="IPR049962">
    <property type="entry name" value="THUMP_ThiI"/>
</dbReference>
<dbReference type="InterPro" id="IPR003720">
    <property type="entry name" value="tRNA_STrfase"/>
</dbReference>
<dbReference type="InterPro" id="IPR050102">
    <property type="entry name" value="tRNA_sulfurtransferase_ThiI"/>
</dbReference>
<dbReference type="NCBIfam" id="TIGR04271">
    <property type="entry name" value="ThiI_C_thiazole"/>
    <property type="match status" value="1"/>
</dbReference>
<dbReference type="NCBIfam" id="TIGR00342">
    <property type="entry name" value="tRNA uracil 4-sulfurtransferase ThiI"/>
    <property type="match status" value="1"/>
</dbReference>
<dbReference type="PANTHER" id="PTHR43209">
    <property type="entry name" value="TRNA SULFURTRANSFERASE"/>
    <property type="match status" value="1"/>
</dbReference>
<dbReference type="PANTHER" id="PTHR43209:SF1">
    <property type="entry name" value="TRNA SULFURTRANSFERASE"/>
    <property type="match status" value="1"/>
</dbReference>
<dbReference type="Pfam" id="PF02568">
    <property type="entry name" value="ThiI"/>
    <property type="match status" value="1"/>
</dbReference>
<dbReference type="Pfam" id="PF22025">
    <property type="entry name" value="ThiI_fer"/>
    <property type="match status" value="1"/>
</dbReference>
<dbReference type="Pfam" id="PF02926">
    <property type="entry name" value="THUMP"/>
    <property type="match status" value="1"/>
</dbReference>
<dbReference type="SMART" id="SM00981">
    <property type="entry name" value="THUMP"/>
    <property type="match status" value="1"/>
</dbReference>
<dbReference type="SUPFAM" id="SSF52402">
    <property type="entry name" value="Adenine nucleotide alpha hydrolases-like"/>
    <property type="match status" value="1"/>
</dbReference>
<dbReference type="SUPFAM" id="SSF52821">
    <property type="entry name" value="Rhodanese/Cell cycle control phosphatase"/>
    <property type="match status" value="1"/>
</dbReference>
<dbReference type="SUPFAM" id="SSF143437">
    <property type="entry name" value="THUMP domain-like"/>
    <property type="match status" value="1"/>
</dbReference>
<dbReference type="PROSITE" id="PS50206">
    <property type="entry name" value="RHODANESE_3"/>
    <property type="match status" value="1"/>
</dbReference>
<dbReference type="PROSITE" id="PS51165">
    <property type="entry name" value="THUMP"/>
    <property type="match status" value="1"/>
</dbReference>
<name>THII_ECOSE</name>
<protein>
    <recommendedName>
        <fullName evidence="1">tRNA sulfurtransferase</fullName>
        <ecNumber evidence="1">2.8.1.4</ecNumber>
    </recommendedName>
    <alternativeName>
        <fullName evidence="1">Sulfur carrier protein ThiS sulfurtransferase</fullName>
    </alternativeName>
    <alternativeName>
        <fullName evidence="1">Thiamine biosynthesis protein ThiI</fullName>
    </alternativeName>
    <alternativeName>
        <fullName evidence="1">tRNA 4-thiouridine synthase</fullName>
    </alternativeName>
</protein>